<organism>
    <name type="scientific">Salmonella arizonae (strain ATCC BAA-731 / CDC346-86 / RSK2980)</name>
    <dbReference type="NCBI Taxonomy" id="41514"/>
    <lineage>
        <taxon>Bacteria</taxon>
        <taxon>Pseudomonadati</taxon>
        <taxon>Pseudomonadota</taxon>
        <taxon>Gammaproteobacteria</taxon>
        <taxon>Enterobacterales</taxon>
        <taxon>Enterobacteriaceae</taxon>
        <taxon>Salmonella</taxon>
    </lineage>
</organism>
<gene>
    <name evidence="1" type="primary">rsmJ</name>
    <name type="synonym">yhiQ</name>
    <name type="ordered locus">SARI_04043</name>
</gene>
<reference key="1">
    <citation type="submission" date="2007-11" db="EMBL/GenBank/DDBJ databases">
        <authorList>
            <consortium name="The Salmonella enterica serovar Arizonae Genome Sequencing Project"/>
            <person name="McClelland M."/>
            <person name="Sanderson E.K."/>
            <person name="Porwollik S."/>
            <person name="Spieth J."/>
            <person name="Clifton W.S."/>
            <person name="Fulton R."/>
            <person name="Chunyan W."/>
            <person name="Wollam A."/>
            <person name="Shah N."/>
            <person name="Pepin K."/>
            <person name="Bhonagiri V."/>
            <person name="Nash W."/>
            <person name="Johnson M."/>
            <person name="Thiruvilangam P."/>
            <person name="Wilson R."/>
        </authorList>
    </citation>
    <scope>NUCLEOTIDE SEQUENCE [LARGE SCALE GENOMIC DNA]</scope>
    <source>
        <strain>ATCC BAA-731 / CDC346-86 / RSK2980</strain>
    </source>
</reference>
<evidence type="ECO:0000255" key="1">
    <source>
        <dbReference type="HAMAP-Rule" id="MF_01523"/>
    </source>
</evidence>
<protein>
    <recommendedName>
        <fullName evidence="1">Ribosomal RNA small subunit methyltransferase J</fullName>
        <ecNumber evidence="1">2.1.1.242</ecNumber>
    </recommendedName>
    <alternativeName>
        <fullName evidence="1">16S rRNA m2G1516 methyltransferase</fullName>
    </alternativeName>
    <alternativeName>
        <fullName evidence="1">rRNA (guanine-N(2)-)-methyltransferase</fullName>
    </alternativeName>
</protein>
<feature type="chain" id="PRO_1000087568" description="Ribosomal RNA small subunit methyltransferase J">
    <location>
        <begin position="1"/>
        <end position="249"/>
    </location>
</feature>
<feature type="binding site" evidence="1">
    <location>
        <begin position="101"/>
        <end position="102"/>
    </location>
    <ligand>
        <name>S-adenosyl-L-methionine</name>
        <dbReference type="ChEBI" id="CHEBI:59789"/>
    </ligand>
</feature>
<feature type="binding site" evidence="1">
    <location>
        <begin position="117"/>
        <end position="118"/>
    </location>
    <ligand>
        <name>S-adenosyl-L-methionine</name>
        <dbReference type="ChEBI" id="CHEBI:59789"/>
    </ligand>
</feature>
<feature type="binding site" evidence="1">
    <location>
        <begin position="153"/>
        <end position="154"/>
    </location>
    <ligand>
        <name>S-adenosyl-L-methionine</name>
        <dbReference type="ChEBI" id="CHEBI:59789"/>
    </ligand>
</feature>
<feature type="binding site" evidence="1">
    <location>
        <position position="171"/>
    </location>
    <ligand>
        <name>S-adenosyl-L-methionine</name>
        <dbReference type="ChEBI" id="CHEBI:59789"/>
    </ligand>
</feature>
<name>RSMJ_SALAR</name>
<accession>A9MLL7</accession>
<sequence length="249" mass="26931">MKICLLDETGAGDGALSVLAARWGLEHDENNLMALVLTPQHLELRKRDEPKLGGIFVDFLGGAMAHRRKFGGGRGEAVAKAVGIKGDYLPDVVDATAGLGRDAFVLASVGCRVRMLERNPVVAALLDDGLARGYADADIGPWLRQRLQLIHASSLTALTDITPRPQVVYLDPMFPHRQKSALVKKEMRVFQSLVGPDLDADGLLEPARQLATKRVVVKRPDYAPPLADIATPNAIVTKGHRFDIYAGTA</sequence>
<proteinExistence type="inferred from homology"/>
<comment type="function">
    <text evidence="1">Specifically methylates the guanosine in position 1516 of 16S rRNA.</text>
</comment>
<comment type="catalytic activity">
    <reaction evidence="1">
        <text>guanosine(1516) in 16S rRNA + S-adenosyl-L-methionine = N(2)-methylguanosine(1516) in 16S rRNA + S-adenosyl-L-homocysteine + H(+)</text>
        <dbReference type="Rhea" id="RHEA:43220"/>
        <dbReference type="Rhea" id="RHEA-COMP:10412"/>
        <dbReference type="Rhea" id="RHEA-COMP:10413"/>
        <dbReference type="ChEBI" id="CHEBI:15378"/>
        <dbReference type="ChEBI" id="CHEBI:57856"/>
        <dbReference type="ChEBI" id="CHEBI:59789"/>
        <dbReference type="ChEBI" id="CHEBI:74269"/>
        <dbReference type="ChEBI" id="CHEBI:74481"/>
        <dbReference type="EC" id="2.1.1.242"/>
    </reaction>
</comment>
<comment type="subcellular location">
    <subcellularLocation>
        <location evidence="1">Cytoplasm</location>
    </subcellularLocation>
</comment>
<comment type="similarity">
    <text evidence="1">Belongs to the methyltransferase superfamily. RsmJ family.</text>
</comment>
<keyword id="KW-0963">Cytoplasm</keyword>
<keyword id="KW-0489">Methyltransferase</keyword>
<keyword id="KW-1185">Reference proteome</keyword>
<keyword id="KW-0698">rRNA processing</keyword>
<keyword id="KW-0949">S-adenosyl-L-methionine</keyword>
<keyword id="KW-0808">Transferase</keyword>
<dbReference type="EC" id="2.1.1.242" evidence="1"/>
<dbReference type="EMBL" id="CP000880">
    <property type="protein sequence ID" value="ABX23836.1"/>
    <property type="molecule type" value="Genomic_DNA"/>
</dbReference>
<dbReference type="SMR" id="A9MLL7"/>
<dbReference type="STRING" id="41514.SARI_04043"/>
<dbReference type="KEGG" id="ses:SARI_04043"/>
<dbReference type="HOGENOM" id="CLU_076324_0_0_6"/>
<dbReference type="Proteomes" id="UP000002084">
    <property type="component" value="Chromosome"/>
</dbReference>
<dbReference type="GO" id="GO:0005737">
    <property type="term" value="C:cytoplasm"/>
    <property type="evidence" value="ECO:0007669"/>
    <property type="project" value="UniProtKB-SubCell"/>
</dbReference>
<dbReference type="GO" id="GO:0008990">
    <property type="term" value="F:rRNA (guanine-N2-)-methyltransferase activity"/>
    <property type="evidence" value="ECO:0007669"/>
    <property type="project" value="UniProtKB-UniRule"/>
</dbReference>
<dbReference type="CDD" id="cd02440">
    <property type="entry name" value="AdoMet_MTases"/>
    <property type="match status" value="1"/>
</dbReference>
<dbReference type="FunFam" id="3.40.50.150:FF:000072">
    <property type="entry name" value="Ribosomal RNA small subunit methyltransferase J"/>
    <property type="match status" value="1"/>
</dbReference>
<dbReference type="Gene3D" id="3.40.50.150">
    <property type="entry name" value="Vaccinia Virus protein VP39"/>
    <property type="match status" value="1"/>
</dbReference>
<dbReference type="Gene3D" id="3.40.1630.10">
    <property type="entry name" value="YhiQ-like domain"/>
    <property type="match status" value="1"/>
</dbReference>
<dbReference type="HAMAP" id="MF_01523">
    <property type="entry name" value="16SrRNA_methyltr_J"/>
    <property type="match status" value="1"/>
</dbReference>
<dbReference type="InterPro" id="IPR007536">
    <property type="entry name" value="16SrRNA_methylTrfase_J"/>
</dbReference>
<dbReference type="InterPro" id="IPR029063">
    <property type="entry name" value="SAM-dependent_MTases_sf"/>
</dbReference>
<dbReference type="NCBIfam" id="NF008012">
    <property type="entry name" value="PRK10742.1"/>
    <property type="match status" value="1"/>
</dbReference>
<dbReference type="PANTHER" id="PTHR36112">
    <property type="entry name" value="RIBOSOMAL RNA SMALL SUBUNIT METHYLTRANSFERASE J"/>
    <property type="match status" value="1"/>
</dbReference>
<dbReference type="PANTHER" id="PTHR36112:SF1">
    <property type="entry name" value="RIBOSOMAL RNA SMALL SUBUNIT METHYLTRANSFERASE J"/>
    <property type="match status" value="1"/>
</dbReference>
<dbReference type="Pfam" id="PF04445">
    <property type="entry name" value="SAM_MT"/>
    <property type="match status" value="1"/>
</dbReference>
<dbReference type="SUPFAM" id="SSF53335">
    <property type="entry name" value="S-adenosyl-L-methionine-dependent methyltransferases"/>
    <property type="match status" value="1"/>
</dbReference>